<organism>
    <name type="scientific">Chaetomium globosum (strain ATCC 6205 / CBS 148.51 / DSM 1962 / NBRC 6347 / NRRL 1970)</name>
    <name type="common">Soil fungus</name>
    <dbReference type="NCBI Taxonomy" id="306901"/>
    <lineage>
        <taxon>Eukaryota</taxon>
        <taxon>Fungi</taxon>
        <taxon>Dikarya</taxon>
        <taxon>Ascomycota</taxon>
        <taxon>Pezizomycotina</taxon>
        <taxon>Sordariomycetes</taxon>
        <taxon>Sordariomycetidae</taxon>
        <taxon>Sordariales</taxon>
        <taxon>Chaetomiaceae</taxon>
        <taxon>Chaetomium</taxon>
    </lineage>
</organism>
<accession>Q2H922</accession>
<evidence type="ECO:0000250" key="1"/>
<evidence type="ECO:0000255" key="2"/>
<evidence type="ECO:0000255" key="3">
    <source>
        <dbReference type="PROSITE-ProRule" id="PRU00077"/>
    </source>
</evidence>
<evidence type="ECO:0000255" key="4">
    <source>
        <dbReference type="PROSITE-ProRule" id="PRU00406"/>
    </source>
</evidence>
<evidence type="ECO:0000255" key="5">
    <source>
        <dbReference type="PROSITE-ProRule" id="PRU00448"/>
    </source>
</evidence>
<evidence type="ECO:0000256" key="6">
    <source>
        <dbReference type="SAM" id="MobiDB-lite"/>
    </source>
</evidence>
<evidence type="ECO:0000305" key="7"/>
<keyword id="KW-0009">Actin-binding</keyword>
<keyword id="KW-1003">Cell membrane</keyword>
<keyword id="KW-0175">Coiled coil</keyword>
<keyword id="KW-0963">Cytoplasm</keyword>
<keyword id="KW-0206">Cytoskeleton</keyword>
<keyword id="KW-0254">Endocytosis</keyword>
<keyword id="KW-0967">Endosome</keyword>
<keyword id="KW-0472">Membrane</keyword>
<keyword id="KW-1185">Reference proteome</keyword>
<keyword id="KW-0677">Repeat</keyword>
<name>PAN1_CHAGB</name>
<comment type="function">
    <text evidence="1">Component of the PAN1 actin cytoskeleton-regulatory complex required for the internalization of endosomes during actin-coupled endocytosis. The complex links the site of endocytosis to the cell membrane-associated actin cytoskeleton. Mediates uptake of external molecules and vacuolar degradation of plasma membrane proteins. Plays a role in the proper organization of the cell membrane-associated actin cytoskeleton and promotes its destabilization (By similarity).</text>
</comment>
<comment type="subunit">
    <text evidence="1">Component of the PAN1 actin cytoskeleton-regulatory complex.</text>
</comment>
<comment type="subcellular location">
    <subcellularLocation>
        <location evidence="1">Cell membrane</location>
        <topology evidence="1">Peripheral membrane protein</topology>
        <orientation evidence="1">Cytoplasmic side</orientation>
    </subcellularLocation>
    <subcellularLocation>
        <location evidence="1">Endosome membrane</location>
        <topology evidence="1">Peripheral membrane protein</topology>
        <orientation evidence="1">Cytoplasmic side</orientation>
    </subcellularLocation>
    <subcellularLocation>
        <location evidence="1">Cytoplasm</location>
        <location evidence="1">Cytoskeleton</location>
        <location evidence="1">Actin patch</location>
    </subcellularLocation>
    <text evidence="1">Cytoplasmic and cortical actin patches.</text>
</comment>
<comment type="similarity">
    <text evidence="7">Belongs to the PAN1 family.</text>
</comment>
<feature type="chain" id="PRO_0000349473" description="Actin cytoskeleton-regulatory complex protein PAN1">
    <location>
        <begin position="1"/>
        <end position="1450"/>
    </location>
</feature>
<feature type="domain" description="EH 1" evidence="3">
    <location>
        <begin position="181"/>
        <end position="270"/>
    </location>
</feature>
<feature type="domain" description="EF-hand 1" evidence="5">
    <location>
        <begin position="214"/>
        <end position="249"/>
    </location>
</feature>
<feature type="domain" description="EH 2" evidence="3">
    <location>
        <begin position="444"/>
        <end position="533"/>
    </location>
</feature>
<feature type="domain" description="EF-hand 2" evidence="5">
    <location>
        <begin position="477"/>
        <end position="512"/>
    </location>
</feature>
<feature type="domain" description="WH2" evidence="4">
    <location>
        <begin position="1417"/>
        <end position="1434"/>
    </location>
</feature>
<feature type="region of interest" description="Disordered" evidence="6">
    <location>
        <begin position="1"/>
        <end position="140"/>
    </location>
</feature>
<feature type="region of interest" description="Disordered" evidence="6">
    <location>
        <begin position="600"/>
        <end position="625"/>
    </location>
</feature>
<feature type="region of interest" description="Disordered" evidence="6">
    <location>
        <begin position="788"/>
        <end position="851"/>
    </location>
</feature>
<feature type="region of interest" description="Disordered" evidence="6">
    <location>
        <begin position="865"/>
        <end position="1450"/>
    </location>
</feature>
<feature type="coiled-coil region" evidence="2">
    <location>
        <begin position="622"/>
        <end position="741"/>
    </location>
</feature>
<feature type="coiled-coil region" evidence="2">
    <location>
        <begin position="960"/>
        <end position="1148"/>
    </location>
</feature>
<feature type="compositionally biased region" description="Low complexity" evidence="6">
    <location>
        <begin position="15"/>
        <end position="37"/>
    </location>
</feature>
<feature type="compositionally biased region" description="Low complexity" evidence="6">
    <location>
        <begin position="59"/>
        <end position="71"/>
    </location>
</feature>
<feature type="compositionally biased region" description="Polar residues" evidence="6">
    <location>
        <begin position="72"/>
        <end position="83"/>
    </location>
</feature>
<feature type="compositionally biased region" description="Low complexity" evidence="6">
    <location>
        <begin position="93"/>
        <end position="119"/>
    </location>
</feature>
<feature type="compositionally biased region" description="Pro residues" evidence="6">
    <location>
        <begin position="120"/>
        <end position="136"/>
    </location>
</feature>
<feature type="compositionally biased region" description="Basic and acidic residues" evidence="6">
    <location>
        <begin position="788"/>
        <end position="850"/>
    </location>
</feature>
<feature type="compositionally biased region" description="Low complexity" evidence="6">
    <location>
        <begin position="902"/>
        <end position="924"/>
    </location>
</feature>
<feature type="compositionally biased region" description="Basic and acidic residues" evidence="6">
    <location>
        <begin position="965"/>
        <end position="997"/>
    </location>
</feature>
<feature type="compositionally biased region" description="Basic and acidic residues" evidence="6">
    <location>
        <begin position="1026"/>
        <end position="1101"/>
    </location>
</feature>
<feature type="compositionally biased region" description="Basic and acidic residues" evidence="6">
    <location>
        <begin position="1110"/>
        <end position="1140"/>
    </location>
</feature>
<feature type="compositionally biased region" description="Acidic residues" evidence="6">
    <location>
        <begin position="1141"/>
        <end position="1153"/>
    </location>
</feature>
<feature type="compositionally biased region" description="Polar residues" evidence="6">
    <location>
        <begin position="1156"/>
        <end position="1169"/>
    </location>
</feature>
<feature type="compositionally biased region" description="Pro residues" evidence="6">
    <location>
        <begin position="1178"/>
        <end position="1188"/>
    </location>
</feature>
<feature type="compositionally biased region" description="Pro residues" evidence="6">
    <location>
        <begin position="1222"/>
        <end position="1239"/>
    </location>
</feature>
<feature type="compositionally biased region" description="Basic and acidic residues" evidence="6">
    <location>
        <begin position="1265"/>
        <end position="1275"/>
    </location>
</feature>
<feature type="compositionally biased region" description="Acidic residues" evidence="6">
    <location>
        <begin position="1276"/>
        <end position="1285"/>
    </location>
</feature>
<feature type="compositionally biased region" description="Polar residues" evidence="6">
    <location>
        <begin position="1314"/>
        <end position="1323"/>
    </location>
</feature>
<feature type="compositionally biased region" description="Pro residues" evidence="6">
    <location>
        <begin position="1327"/>
        <end position="1352"/>
    </location>
</feature>
<feature type="compositionally biased region" description="Pro residues" evidence="6">
    <location>
        <begin position="1361"/>
        <end position="1375"/>
    </location>
</feature>
<feature type="compositionally biased region" description="Pro residues" evidence="6">
    <location>
        <begin position="1381"/>
        <end position="1411"/>
    </location>
</feature>
<proteinExistence type="inferred from homology"/>
<sequence>MYSNPNNFFGGNAMGPGAPQYGAGQPQQQQQQQQQPDPFAPQPTGFAQAPLQQQYTGYPGLQAPQGQLQPQFTGYGQTPQQGMATGAPPMPAIPQQYQQQFQQQQTQQQQPQQQQMPFAAAPPQPTQTLAPPPPVKPQATGFSEMAASFHAGGGARSQPSAAPRKANTVPNIRLSFITAPDQAKFETLFKSAVGDGQTTMSGEKARDLLLRSRLDGDSLSHIWTLADTTRSGQLHFPEFALAMYLCNLKLTGKSLPPSLPDNIKNEVSSMVDIINFSIAEESGSASATSTNAPDFGVRQNTATPPVIQHPQPQPSSSQLLQAQMTGFPAQQTGFMGQGLQPQQTGMPQATGYTGPRPPMPPMPTGFGSNLSPNVGPGGMIAPLNAQPTGRPGQWGLVNTPATGLPNIDALQARMMPQQGREQQDYTTAGLQGNAVIPWAITKDEKTRYDALFRAWDGLNKGYIGGDQAIEIFGQSGLEKPDLERAWTLADHGNKGRLDLDEFAVAMHLIYRKLNGYPIPNQLPPELVPPSTRNFNESLGTIKNMLHKESDFRKNSGASLLPQKTGVSYLKNHSFRGTGGASGNRKDATVFKNNDDAVGYRSSARRRVGNASPRPESPASVGSNEELSLDQLRKKIKEKQVLLDAMDFADEKNMEEDDILDRRDRREAEELYRRIRRIQEDIDNHPDASPIGGDSEAERRALKRQLQNLTDKIPELASQVRKTEKAIADARLELFRLKDAKAHPGSAAAIVGTGPGGAITESDRLKARAKAMMQQRTAALTGKKIDVTSDQDAEKRLEEESIKARTEKENNERMVRDVEDSVRDFAKGIEDNLKEGGQDSTTEHEKRRWEDALGVEDEVRDFIYDLQRSSRASRIRSQDRQGGRKATQEPVSAEAPPTARVDSPASISRTASPAAPPAAGGSYSSYKTPEERAAFIKQQAEQRMAERLAALGIKAPTKPGETAAQRAEREQAERAAKLRQAEEEDARRETERQARLAEEQGVPPPAVSQAAKPEGKKPPPPPSRKAAKPDDRRAEEELATKKAEEERLERERGEQERATRELESQAKAQEDELAKEREEADARLRALEEQVRQGKLKKEEEKRKKKAALAEAKEKEAQLAQRRAEIEAARKREEELRRQLEAMDDDSSSDDEGPEQITPQASTPTMNDSHIVNREPERQPTPPPAPVVSPPQIVTSSPPTEGESRNPYFRMMSHSSDASPATAPAPPVAPPVAPPAPPQPEASTNPFHRIAQAPAPETSPVPVTRRRPDDDGWGSDKDEEDEESDDDRPGGKSAAALASILFGTMAPPRPLSATGDKSATSPTVSSPVAPPPESASPPAASPSAPPPPPPMPGSFPSASPGPGAPPPPPPPPPPMPSAGGPPGAPPAPPPPPPGMAPPAPPPPPPAGGPPAAAPAGGRPAGLLGQIQAGKALKKTTTRDKSAAAVAGRVLD</sequence>
<dbReference type="EMBL" id="CH408030">
    <property type="protein sequence ID" value="EAQ91347.1"/>
    <property type="molecule type" value="Genomic_DNA"/>
</dbReference>
<dbReference type="RefSeq" id="XP_001229798.1">
    <property type="nucleotide sequence ID" value="XM_001229797.1"/>
</dbReference>
<dbReference type="SMR" id="Q2H922"/>
<dbReference type="FunCoup" id="Q2H922">
    <property type="interactions" value="52"/>
</dbReference>
<dbReference type="STRING" id="306901.Q2H922"/>
<dbReference type="GeneID" id="4388769"/>
<dbReference type="VEuPathDB" id="FungiDB:CHGG_03282"/>
<dbReference type="eggNOG" id="KOG0998">
    <property type="taxonomic scope" value="Eukaryota"/>
</dbReference>
<dbReference type="HOGENOM" id="CLU_001963_1_0_1"/>
<dbReference type="InParanoid" id="Q2H922"/>
<dbReference type="OMA" id="GMPGQWG"/>
<dbReference type="OrthoDB" id="2015333at2759"/>
<dbReference type="Proteomes" id="UP000001056">
    <property type="component" value="Unassembled WGS sequence"/>
</dbReference>
<dbReference type="GO" id="GO:0030479">
    <property type="term" value="C:actin cortical patch"/>
    <property type="evidence" value="ECO:0007669"/>
    <property type="project" value="UniProtKB-SubCell"/>
</dbReference>
<dbReference type="GO" id="GO:0010008">
    <property type="term" value="C:endosome membrane"/>
    <property type="evidence" value="ECO:0007669"/>
    <property type="project" value="UniProtKB-SubCell"/>
</dbReference>
<dbReference type="GO" id="GO:0005886">
    <property type="term" value="C:plasma membrane"/>
    <property type="evidence" value="ECO:0007669"/>
    <property type="project" value="UniProtKB-SubCell"/>
</dbReference>
<dbReference type="GO" id="GO:0003779">
    <property type="term" value="F:actin binding"/>
    <property type="evidence" value="ECO:0007669"/>
    <property type="project" value="UniProtKB-KW"/>
</dbReference>
<dbReference type="GO" id="GO:0005509">
    <property type="term" value="F:calcium ion binding"/>
    <property type="evidence" value="ECO:0007669"/>
    <property type="project" value="InterPro"/>
</dbReference>
<dbReference type="GO" id="GO:0006897">
    <property type="term" value="P:endocytosis"/>
    <property type="evidence" value="ECO:0007669"/>
    <property type="project" value="UniProtKB-KW"/>
</dbReference>
<dbReference type="GO" id="GO:0016197">
    <property type="term" value="P:endosomal transport"/>
    <property type="evidence" value="ECO:0007669"/>
    <property type="project" value="TreeGrafter"/>
</dbReference>
<dbReference type="CDD" id="cd00052">
    <property type="entry name" value="EH"/>
    <property type="match status" value="2"/>
</dbReference>
<dbReference type="FunFam" id="1.10.238.10:FF:000349">
    <property type="entry name" value="Actin cytoskeleton-regulatory complex protein PAN1"/>
    <property type="match status" value="1"/>
</dbReference>
<dbReference type="Gene3D" id="1.10.238.10">
    <property type="entry name" value="EF-hand"/>
    <property type="match status" value="2"/>
</dbReference>
<dbReference type="InterPro" id="IPR011992">
    <property type="entry name" value="EF-hand-dom_pair"/>
</dbReference>
<dbReference type="InterPro" id="IPR002048">
    <property type="entry name" value="EF_hand_dom"/>
</dbReference>
<dbReference type="InterPro" id="IPR000261">
    <property type="entry name" value="EH_dom"/>
</dbReference>
<dbReference type="InterPro" id="IPR003124">
    <property type="entry name" value="WH2_dom"/>
</dbReference>
<dbReference type="PANTHER" id="PTHR11216">
    <property type="entry name" value="EH DOMAIN"/>
    <property type="match status" value="1"/>
</dbReference>
<dbReference type="Pfam" id="PF12763">
    <property type="entry name" value="EH"/>
    <property type="match status" value="2"/>
</dbReference>
<dbReference type="Pfam" id="PF02205">
    <property type="entry name" value="WH2"/>
    <property type="match status" value="1"/>
</dbReference>
<dbReference type="SMART" id="SM00054">
    <property type="entry name" value="EFh"/>
    <property type="match status" value="2"/>
</dbReference>
<dbReference type="SMART" id="SM00027">
    <property type="entry name" value="EH"/>
    <property type="match status" value="2"/>
</dbReference>
<dbReference type="SUPFAM" id="SSF47473">
    <property type="entry name" value="EF-hand"/>
    <property type="match status" value="2"/>
</dbReference>
<dbReference type="PROSITE" id="PS50222">
    <property type="entry name" value="EF_HAND_2"/>
    <property type="match status" value="2"/>
</dbReference>
<dbReference type="PROSITE" id="PS50031">
    <property type="entry name" value="EH"/>
    <property type="match status" value="2"/>
</dbReference>
<dbReference type="PROSITE" id="PS51082">
    <property type="entry name" value="WH2"/>
    <property type="match status" value="1"/>
</dbReference>
<gene>
    <name type="primary">PAN1</name>
    <name type="ORF">CHGG_03282</name>
</gene>
<protein>
    <recommendedName>
        <fullName>Actin cytoskeleton-regulatory complex protein PAN1</fullName>
    </recommendedName>
</protein>
<reference key="1">
    <citation type="journal article" date="2015" name="Genome Announc.">
        <title>Draft genome sequence of the cellulolytic fungus Chaetomium globosum.</title>
        <authorList>
            <person name="Cuomo C.A."/>
            <person name="Untereiner W.A."/>
            <person name="Ma L.-J."/>
            <person name="Grabherr M."/>
            <person name="Birren B.W."/>
        </authorList>
    </citation>
    <scope>NUCLEOTIDE SEQUENCE [LARGE SCALE GENOMIC DNA]</scope>
    <source>
        <strain>ATCC 6205 / CBS 148.51 / DSM 1962 / NBRC 6347 / NRRL 1970</strain>
    </source>
</reference>